<protein>
    <recommendedName>
        <fullName evidence="1">Protein GrpE</fullName>
    </recommendedName>
    <alternativeName>
        <fullName evidence="1">HSP-70 cofactor</fullName>
    </alternativeName>
</protein>
<organism>
    <name type="scientific">Bacillus licheniformis (strain ATCC 14580 / DSM 13 / JCM 2505 / CCUG 7422 / NBRC 12200 / NCIMB 9375 / NCTC 10341 / NRRL NRS-1264 / Gibson 46)</name>
    <dbReference type="NCBI Taxonomy" id="279010"/>
    <lineage>
        <taxon>Bacteria</taxon>
        <taxon>Bacillati</taxon>
        <taxon>Bacillota</taxon>
        <taxon>Bacilli</taxon>
        <taxon>Bacillales</taxon>
        <taxon>Bacillaceae</taxon>
        <taxon>Bacillus</taxon>
    </lineage>
</organism>
<accession>Q65H53</accession>
<accession>Q62SK9</accession>
<name>GRPE_BACLD</name>
<keyword id="KW-0143">Chaperone</keyword>
<keyword id="KW-0963">Cytoplasm</keyword>
<keyword id="KW-1185">Reference proteome</keyword>
<keyword id="KW-0346">Stress response</keyword>
<dbReference type="EMBL" id="CP000002">
    <property type="protein sequence ID" value="AAU24250.2"/>
    <property type="molecule type" value="Genomic_DNA"/>
</dbReference>
<dbReference type="EMBL" id="AE017333">
    <property type="protein sequence ID" value="AAU41611.1"/>
    <property type="molecule type" value="Genomic_DNA"/>
</dbReference>
<dbReference type="RefSeq" id="WP_003183669.1">
    <property type="nucleotide sequence ID" value="NC_006322.1"/>
</dbReference>
<dbReference type="SMR" id="Q65H53"/>
<dbReference type="STRING" id="279010.BL02095"/>
<dbReference type="GeneID" id="92860669"/>
<dbReference type="KEGG" id="bld:BLi02740"/>
<dbReference type="KEGG" id="bli:BL02095"/>
<dbReference type="eggNOG" id="COG0576">
    <property type="taxonomic scope" value="Bacteria"/>
</dbReference>
<dbReference type="HOGENOM" id="CLU_057217_5_2_9"/>
<dbReference type="Proteomes" id="UP000000606">
    <property type="component" value="Chromosome"/>
</dbReference>
<dbReference type="GO" id="GO:0005737">
    <property type="term" value="C:cytoplasm"/>
    <property type="evidence" value="ECO:0007669"/>
    <property type="project" value="UniProtKB-SubCell"/>
</dbReference>
<dbReference type="GO" id="GO:0000774">
    <property type="term" value="F:adenyl-nucleotide exchange factor activity"/>
    <property type="evidence" value="ECO:0007669"/>
    <property type="project" value="InterPro"/>
</dbReference>
<dbReference type="GO" id="GO:0042803">
    <property type="term" value="F:protein homodimerization activity"/>
    <property type="evidence" value="ECO:0007669"/>
    <property type="project" value="InterPro"/>
</dbReference>
<dbReference type="GO" id="GO:0051087">
    <property type="term" value="F:protein-folding chaperone binding"/>
    <property type="evidence" value="ECO:0007669"/>
    <property type="project" value="InterPro"/>
</dbReference>
<dbReference type="GO" id="GO:0051082">
    <property type="term" value="F:unfolded protein binding"/>
    <property type="evidence" value="ECO:0007669"/>
    <property type="project" value="TreeGrafter"/>
</dbReference>
<dbReference type="GO" id="GO:0006457">
    <property type="term" value="P:protein folding"/>
    <property type="evidence" value="ECO:0007669"/>
    <property type="project" value="InterPro"/>
</dbReference>
<dbReference type="CDD" id="cd00446">
    <property type="entry name" value="GrpE"/>
    <property type="match status" value="1"/>
</dbReference>
<dbReference type="FunFam" id="2.30.22.10:FF:000001">
    <property type="entry name" value="Protein GrpE"/>
    <property type="match status" value="1"/>
</dbReference>
<dbReference type="FunFam" id="3.90.20.20:FF:000002">
    <property type="entry name" value="Protein GrpE"/>
    <property type="match status" value="1"/>
</dbReference>
<dbReference type="Gene3D" id="3.90.20.20">
    <property type="match status" value="1"/>
</dbReference>
<dbReference type="Gene3D" id="2.30.22.10">
    <property type="entry name" value="Head domain of nucleotide exchange factor GrpE"/>
    <property type="match status" value="1"/>
</dbReference>
<dbReference type="HAMAP" id="MF_01151">
    <property type="entry name" value="GrpE"/>
    <property type="match status" value="1"/>
</dbReference>
<dbReference type="InterPro" id="IPR000740">
    <property type="entry name" value="GrpE"/>
</dbReference>
<dbReference type="InterPro" id="IPR013805">
    <property type="entry name" value="GrpE_coiled_coil"/>
</dbReference>
<dbReference type="InterPro" id="IPR009012">
    <property type="entry name" value="GrpE_head"/>
</dbReference>
<dbReference type="NCBIfam" id="NF010738">
    <property type="entry name" value="PRK14140.1"/>
    <property type="match status" value="1"/>
</dbReference>
<dbReference type="NCBIfam" id="NF010748">
    <property type="entry name" value="PRK14150.1"/>
    <property type="match status" value="1"/>
</dbReference>
<dbReference type="PANTHER" id="PTHR21237">
    <property type="entry name" value="GRPE PROTEIN"/>
    <property type="match status" value="1"/>
</dbReference>
<dbReference type="PANTHER" id="PTHR21237:SF23">
    <property type="entry name" value="GRPE PROTEIN HOMOLOG, MITOCHONDRIAL"/>
    <property type="match status" value="1"/>
</dbReference>
<dbReference type="Pfam" id="PF01025">
    <property type="entry name" value="GrpE"/>
    <property type="match status" value="1"/>
</dbReference>
<dbReference type="PRINTS" id="PR00773">
    <property type="entry name" value="GRPEPROTEIN"/>
</dbReference>
<dbReference type="SUPFAM" id="SSF58014">
    <property type="entry name" value="Coiled-coil domain of nucleotide exchange factor GrpE"/>
    <property type="match status" value="1"/>
</dbReference>
<dbReference type="SUPFAM" id="SSF51064">
    <property type="entry name" value="Head domain of nucleotide exchange factor GrpE"/>
    <property type="match status" value="1"/>
</dbReference>
<dbReference type="PROSITE" id="PS01071">
    <property type="entry name" value="GRPE"/>
    <property type="match status" value="1"/>
</dbReference>
<proteinExistence type="inferred from homology"/>
<evidence type="ECO:0000255" key="1">
    <source>
        <dbReference type="HAMAP-Rule" id="MF_01151"/>
    </source>
</evidence>
<evidence type="ECO:0000256" key="2">
    <source>
        <dbReference type="SAM" id="MobiDB-lite"/>
    </source>
</evidence>
<sequence length="194" mass="22502">MAEEKQNEELNEQEELNETEAETAEAEQTAAEADAPAEETQTEMLEKQLKELQERLEEKENKLLRVQADFENYKRRARLDLEAAEKYRSQRIISDLLPALDNFERALQIDPDNEQTKSLLQGMEMVHRQILEALKNEGVEQIPSVGEQFDPNMHQAVMQVEDEAYESNAVVEELQKGYKLKDRVIRPSMVKVNQ</sequence>
<comment type="function">
    <text evidence="1">Participates actively in the response to hyperosmotic and heat shock by preventing the aggregation of stress-denatured proteins, in association with DnaK and GrpE. It is the nucleotide exchange factor for DnaK and may function as a thermosensor. Unfolded proteins bind initially to DnaJ; upon interaction with the DnaJ-bound protein, DnaK hydrolyzes its bound ATP, resulting in the formation of a stable complex. GrpE releases ADP from DnaK; ATP binding to DnaK triggers the release of the substrate protein, thus completing the reaction cycle. Several rounds of ATP-dependent interactions between DnaJ, DnaK and GrpE are required for fully efficient folding.</text>
</comment>
<comment type="subunit">
    <text evidence="1">Homodimer.</text>
</comment>
<comment type="subcellular location">
    <subcellularLocation>
        <location evidence="1">Cytoplasm</location>
    </subcellularLocation>
</comment>
<comment type="similarity">
    <text evidence="1">Belongs to the GrpE family.</text>
</comment>
<reference key="1">
    <citation type="journal article" date="2004" name="J. Mol. Microbiol. Biotechnol.">
        <title>The complete genome sequence of Bacillus licheniformis DSM13, an organism with great industrial potential.</title>
        <authorList>
            <person name="Veith B."/>
            <person name="Herzberg C."/>
            <person name="Steckel S."/>
            <person name="Feesche J."/>
            <person name="Maurer K.H."/>
            <person name="Ehrenreich P."/>
            <person name="Baeumer S."/>
            <person name="Henne A."/>
            <person name="Liesegang H."/>
            <person name="Merkl R."/>
            <person name="Ehrenreich A."/>
            <person name="Gottschalk G."/>
        </authorList>
    </citation>
    <scope>NUCLEOTIDE SEQUENCE [LARGE SCALE GENOMIC DNA]</scope>
    <source>
        <strain>ATCC 14580 / DSM 13 / JCM 2505 / CCUG 7422 / NBRC 12200 / NCIMB 9375 / NCTC 10341 / NRRL NRS-1264 / Gibson 46</strain>
    </source>
</reference>
<reference key="2">
    <citation type="journal article" date="2004" name="Genome Biol.">
        <title>Complete genome sequence of the industrial bacterium Bacillus licheniformis and comparisons with closely related Bacillus species.</title>
        <authorList>
            <person name="Rey M.W."/>
            <person name="Ramaiya P."/>
            <person name="Nelson B.A."/>
            <person name="Brody-Karpin S.D."/>
            <person name="Zaretsky E.J."/>
            <person name="Tang M."/>
            <person name="Lopez de Leon A."/>
            <person name="Xiang H."/>
            <person name="Gusti V."/>
            <person name="Clausen I.G."/>
            <person name="Olsen P.B."/>
            <person name="Rasmussen M.D."/>
            <person name="Andersen J.T."/>
            <person name="Joergensen P.L."/>
            <person name="Larsen T.S."/>
            <person name="Sorokin A."/>
            <person name="Bolotin A."/>
            <person name="Lapidus A."/>
            <person name="Galleron N."/>
            <person name="Ehrlich S.D."/>
            <person name="Berka R.M."/>
        </authorList>
    </citation>
    <scope>NUCLEOTIDE SEQUENCE [LARGE SCALE GENOMIC DNA]</scope>
    <source>
        <strain>ATCC 14580 / DSM 13 / JCM 2505 / CCUG 7422 / NBRC 12200 / NCIMB 9375 / NCTC 10341 / NRRL NRS-1264 / Gibson 46</strain>
    </source>
</reference>
<gene>
    <name evidence="1" type="primary">grpE</name>
    <name type="ordered locus">BLi02740</name>
    <name type="ordered locus">BL02095</name>
</gene>
<feature type="chain" id="PRO_1000053542" description="Protein GrpE">
    <location>
        <begin position="1"/>
        <end position="194"/>
    </location>
</feature>
<feature type="region of interest" description="Disordered" evidence="2">
    <location>
        <begin position="1"/>
        <end position="44"/>
    </location>
</feature>
<feature type="compositionally biased region" description="Acidic residues" evidence="2">
    <location>
        <begin position="9"/>
        <end position="25"/>
    </location>
</feature>